<sequence>MWLSDEFPRDLKTLRDRKPLVHHFMNFVVMNDAANVTLAIGASPIMAHAKEEVEELASKANALYINIGTLDEYWVESMIIAGKAASRNNVPILLDPVGAGATRYRTEVVKRILSETEVSVVKGNGGEMLALAGVTGGVKGVDSIVNATMDTAVKIAEEYGVTAVITGPWDYVSDGVRKVIVKNGTPLLQYVTGSGCMVGSVIASFMAINRDFVKASVEGLVAFEIAAEKAEAKSKAPGTFKQYLIDELFNLTGDDYVKMAKVEVVQ</sequence>
<name>THIM_CALMQ</name>
<comment type="function">
    <text evidence="1">Catalyzes the phosphorylation of the hydroxyl group of 4-methyl-5-beta-hydroxyethylthiazole (THZ).</text>
</comment>
<comment type="catalytic activity">
    <reaction evidence="1">
        <text>5-(2-hydroxyethyl)-4-methylthiazole + ATP = 4-methyl-5-(2-phosphooxyethyl)-thiazole + ADP + H(+)</text>
        <dbReference type="Rhea" id="RHEA:24212"/>
        <dbReference type="ChEBI" id="CHEBI:15378"/>
        <dbReference type="ChEBI" id="CHEBI:17957"/>
        <dbReference type="ChEBI" id="CHEBI:30616"/>
        <dbReference type="ChEBI" id="CHEBI:58296"/>
        <dbReference type="ChEBI" id="CHEBI:456216"/>
        <dbReference type="EC" id="2.7.1.50"/>
    </reaction>
</comment>
<comment type="cofactor">
    <cofactor evidence="1">
        <name>Mg(2+)</name>
        <dbReference type="ChEBI" id="CHEBI:18420"/>
    </cofactor>
</comment>
<comment type="pathway">
    <text evidence="1">Cofactor biosynthesis; thiamine diphosphate biosynthesis; 4-methyl-5-(2-phosphoethyl)-thiazole from 5-(2-hydroxyethyl)-4-methylthiazole: step 1/1.</text>
</comment>
<comment type="similarity">
    <text evidence="1">Belongs to the Thz kinase family.</text>
</comment>
<keyword id="KW-0067">ATP-binding</keyword>
<keyword id="KW-0418">Kinase</keyword>
<keyword id="KW-0460">Magnesium</keyword>
<keyword id="KW-0479">Metal-binding</keyword>
<keyword id="KW-0547">Nucleotide-binding</keyword>
<keyword id="KW-1185">Reference proteome</keyword>
<keyword id="KW-0784">Thiamine biosynthesis</keyword>
<keyword id="KW-0808">Transferase</keyword>
<proteinExistence type="inferred from homology"/>
<protein>
    <recommendedName>
        <fullName evidence="1">Hydroxyethylthiazole kinase</fullName>
        <ecNumber evidence="1">2.7.1.50</ecNumber>
    </recommendedName>
    <alternativeName>
        <fullName evidence="1">4-methyl-5-beta-hydroxyethylthiazole kinase</fullName>
        <shortName evidence="1">TH kinase</shortName>
        <shortName evidence="1">Thz kinase</shortName>
    </alternativeName>
</protein>
<gene>
    <name evidence="1" type="primary">thiM</name>
    <name type="ordered locus">Cmaq_0062</name>
</gene>
<evidence type="ECO:0000255" key="1">
    <source>
        <dbReference type="HAMAP-Rule" id="MF_00228"/>
    </source>
</evidence>
<organism>
    <name type="scientific">Caldivirga maquilingensis (strain ATCC 700844 / DSM 13496 / JCM 10307 / IC-167)</name>
    <dbReference type="NCBI Taxonomy" id="397948"/>
    <lineage>
        <taxon>Archaea</taxon>
        <taxon>Thermoproteota</taxon>
        <taxon>Thermoprotei</taxon>
        <taxon>Thermoproteales</taxon>
        <taxon>Thermoproteaceae</taxon>
        <taxon>Caldivirga</taxon>
    </lineage>
</organism>
<reference key="1">
    <citation type="submission" date="2007-10" db="EMBL/GenBank/DDBJ databases">
        <title>Complete sequence of Caldivirga maquilingensis IC-167.</title>
        <authorList>
            <consortium name="US DOE Joint Genome Institute"/>
            <person name="Copeland A."/>
            <person name="Lucas S."/>
            <person name="Lapidus A."/>
            <person name="Barry K."/>
            <person name="Glavina del Rio T."/>
            <person name="Dalin E."/>
            <person name="Tice H."/>
            <person name="Pitluck S."/>
            <person name="Saunders E."/>
            <person name="Brettin T."/>
            <person name="Bruce D."/>
            <person name="Detter J.C."/>
            <person name="Han C."/>
            <person name="Schmutz J."/>
            <person name="Larimer F."/>
            <person name="Land M."/>
            <person name="Hauser L."/>
            <person name="Kyrpides N."/>
            <person name="Ivanova N."/>
            <person name="Biddle J.F."/>
            <person name="Zhang Z."/>
            <person name="Fitz-Gibbon S.T."/>
            <person name="Lowe T.M."/>
            <person name="Saltikov C."/>
            <person name="House C.H."/>
            <person name="Richardson P."/>
        </authorList>
    </citation>
    <scope>NUCLEOTIDE SEQUENCE [LARGE SCALE GENOMIC DNA]</scope>
    <source>
        <strain>ATCC 700844 / DSM 13496 / JCM 10307 / IC-167</strain>
    </source>
</reference>
<accession>A8M9N5</accession>
<feature type="chain" id="PRO_0000336577" description="Hydroxyethylthiazole kinase">
    <location>
        <begin position="1"/>
        <end position="266"/>
    </location>
</feature>
<feature type="binding site" evidence="1">
    <location>
        <position position="46"/>
    </location>
    <ligand>
        <name>substrate</name>
    </ligand>
</feature>
<feature type="binding site" evidence="1">
    <location>
        <position position="122"/>
    </location>
    <ligand>
        <name>ATP</name>
        <dbReference type="ChEBI" id="CHEBI:30616"/>
    </ligand>
</feature>
<feature type="binding site" evidence="1">
    <location>
        <position position="166"/>
    </location>
    <ligand>
        <name>ATP</name>
        <dbReference type="ChEBI" id="CHEBI:30616"/>
    </ligand>
</feature>
<feature type="binding site" evidence="1">
    <location>
        <position position="193"/>
    </location>
    <ligand>
        <name>substrate</name>
    </ligand>
</feature>
<dbReference type="EC" id="2.7.1.50" evidence="1"/>
<dbReference type="EMBL" id="CP000852">
    <property type="protein sequence ID" value="ABW00916.1"/>
    <property type="molecule type" value="Genomic_DNA"/>
</dbReference>
<dbReference type="RefSeq" id="WP_012185136.1">
    <property type="nucleotide sequence ID" value="NC_009954.1"/>
</dbReference>
<dbReference type="SMR" id="A8M9N5"/>
<dbReference type="STRING" id="397948.Cmaq_0062"/>
<dbReference type="GeneID" id="5710231"/>
<dbReference type="KEGG" id="cma:Cmaq_0062"/>
<dbReference type="eggNOG" id="arCOG00019">
    <property type="taxonomic scope" value="Archaea"/>
</dbReference>
<dbReference type="HOGENOM" id="CLU_019943_0_0_2"/>
<dbReference type="OrthoDB" id="214286at2157"/>
<dbReference type="UniPathway" id="UPA00060">
    <property type="reaction ID" value="UER00139"/>
</dbReference>
<dbReference type="Proteomes" id="UP000001137">
    <property type="component" value="Chromosome"/>
</dbReference>
<dbReference type="GO" id="GO:0005524">
    <property type="term" value="F:ATP binding"/>
    <property type="evidence" value="ECO:0007669"/>
    <property type="project" value="UniProtKB-UniRule"/>
</dbReference>
<dbReference type="GO" id="GO:0004417">
    <property type="term" value="F:hydroxyethylthiazole kinase activity"/>
    <property type="evidence" value="ECO:0007669"/>
    <property type="project" value="UniProtKB-UniRule"/>
</dbReference>
<dbReference type="GO" id="GO:0000287">
    <property type="term" value="F:magnesium ion binding"/>
    <property type="evidence" value="ECO:0007669"/>
    <property type="project" value="UniProtKB-UniRule"/>
</dbReference>
<dbReference type="GO" id="GO:0009228">
    <property type="term" value="P:thiamine biosynthetic process"/>
    <property type="evidence" value="ECO:0007669"/>
    <property type="project" value="UniProtKB-KW"/>
</dbReference>
<dbReference type="GO" id="GO:0009229">
    <property type="term" value="P:thiamine diphosphate biosynthetic process"/>
    <property type="evidence" value="ECO:0007669"/>
    <property type="project" value="UniProtKB-UniRule"/>
</dbReference>
<dbReference type="CDD" id="cd01170">
    <property type="entry name" value="THZ_kinase"/>
    <property type="match status" value="1"/>
</dbReference>
<dbReference type="Gene3D" id="3.40.1190.20">
    <property type="match status" value="1"/>
</dbReference>
<dbReference type="HAMAP" id="MF_00228">
    <property type="entry name" value="Thz_kinase"/>
    <property type="match status" value="1"/>
</dbReference>
<dbReference type="InterPro" id="IPR000417">
    <property type="entry name" value="Hyethyz_kinase"/>
</dbReference>
<dbReference type="InterPro" id="IPR029056">
    <property type="entry name" value="Ribokinase-like"/>
</dbReference>
<dbReference type="NCBIfam" id="NF006830">
    <property type="entry name" value="PRK09355.1"/>
    <property type="match status" value="1"/>
</dbReference>
<dbReference type="NCBIfam" id="TIGR00694">
    <property type="entry name" value="thiM"/>
    <property type="match status" value="1"/>
</dbReference>
<dbReference type="Pfam" id="PF02110">
    <property type="entry name" value="HK"/>
    <property type="match status" value="1"/>
</dbReference>
<dbReference type="PIRSF" id="PIRSF000513">
    <property type="entry name" value="Thz_kinase"/>
    <property type="match status" value="1"/>
</dbReference>
<dbReference type="PRINTS" id="PR01099">
    <property type="entry name" value="HYETHTZKNASE"/>
</dbReference>
<dbReference type="SUPFAM" id="SSF53613">
    <property type="entry name" value="Ribokinase-like"/>
    <property type="match status" value="1"/>
</dbReference>